<proteinExistence type="inferred from homology"/>
<dbReference type="EMBL" id="CP000468">
    <property type="protein sequence ID" value="ABJ02710.1"/>
    <property type="molecule type" value="Genomic_DNA"/>
</dbReference>
<dbReference type="RefSeq" id="WP_000074795.1">
    <property type="nucleotide sequence ID" value="NZ_CADILS010000003.1"/>
</dbReference>
<dbReference type="SMR" id="A1AGC0"/>
<dbReference type="KEGG" id="ecv:APECO1_3217"/>
<dbReference type="HOGENOM" id="CLU_017584_9_1_6"/>
<dbReference type="Proteomes" id="UP000008216">
    <property type="component" value="Chromosome"/>
</dbReference>
<dbReference type="GO" id="GO:0003677">
    <property type="term" value="F:DNA binding"/>
    <property type="evidence" value="ECO:0007669"/>
    <property type="project" value="UniProtKB-KW"/>
</dbReference>
<dbReference type="GO" id="GO:0003700">
    <property type="term" value="F:DNA-binding transcription factor activity"/>
    <property type="evidence" value="ECO:0007669"/>
    <property type="project" value="UniProtKB-UniRule"/>
</dbReference>
<dbReference type="GO" id="GO:0045892">
    <property type="term" value="P:negative regulation of DNA-templated transcription"/>
    <property type="evidence" value="ECO:0007669"/>
    <property type="project" value="UniProtKB-UniRule"/>
</dbReference>
<dbReference type="CDD" id="cd07377">
    <property type="entry name" value="WHTH_GntR"/>
    <property type="match status" value="1"/>
</dbReference>
<dbReference type="FunFam" id="1.10.10.10:FF:000150">
    <property type="entry name" value="HTH-type transcriptional repressor NanR"/>
    <property type="match status" value="1"/>
</dbReference>
<dbReference type="FunFam" id="1.20.120.530:FF:000006">
    <property type="entry name" value="HTH-type transcriptional repressor NanR"/>
    <property type="match status" value="1"/>
</dbReference>
<dbReference type="Gene3D" id="1.20.120.530">
    <property type="entry name" value="GntR ligand-binding domain-like"/>
    <property type="match status" value="1"/>
</dbReference>
<dbReference type="Gene3D" id="1.10.10.10">
    <property type="entry name" value="Winged helix-like DNA-binding domain superfamily/Winged helix DNA-binding domain"/>
    <property type="match status" value="1"/>
</dbReference>
<dbReference type="HAMAP" id="MF_01236">
    <property type="entry name" value="HTH_NanR"/>
    <property type="match status" value="1"/>
</dbReference>
<dbReference type="InterPro" id="IPR011711">
    <property type="entry name" value="GntR_C"/>
</dbReference>
<dbReference type="InterPro" id="IPR008920">
    <property type="entry name" value="TF_FadR/GntR_C"/>
</dbReference>
<dbReference type="InterPro" id="IPR000524">
    <property type="entry name" value="Tscrpt_reg_HTH_GntR"/>
</dbReference>
<dbReference type="InterPro" id="IPR023730">
    <property type="entry name" value="Tscrpt_reg_NanR"/>
</dbReference>
<dbReference type="InterPro" id="IPR036388">
    <property type="entry name" value="WH-like_DNA-bd_sf"/>
</dbReference>
<dbReference type="InterPro" id="IPR036390">
    <property type="entry name" value="WH_DNA-bd_sf"/>
</dbReference>
<dbReference type="NCBIfam" id="NF003011">
    <property type="entry name" value="PRK03837.1"/>
    <property type="match status" value="1"/>
</dbReference>
<dbReference type="PANTHER" id="PTHR43537:SF53">
    <property type="entry name" value="HTH-TYPE TRANSCRIPTIONAL REPRESSOR NANR"/>
    <property type="match status" value="1"/>
</dbReference>
<dbReference type="PANTHER" id="PTHR43537">
    <property type="entry name" value="TRANSCRIPTIONAL REGULATOR, GNTR FAMILY"/>
    <property type="match status" value="1"/>
</dbReference>
<dbReference type="Pfam" id="PF07729">
    <property type="entry name" value="FCD"/>
    <property type="match status" value="1"/>
</dbReference>
<dbReference type="Pfam" id="PF00392">
    <property type="entry name" value="GntR"/>
    <property type="match status" value="1"/>
</dbReference>
<dbReference type="PRINTS" id="PR00035">
    <property type="entry name" value="HTHGNTR"/>
</dbReference>
<dbReference type="SMART" id="SM00895">
    <property type="entry name" value="FCD"/>
    <property type="match status" value="1"/>
</dbReference>
<dbReference type="SMART" id="SM00345">
    <property type="entry name" value="HTH_GNTR"/>
    <property type="match status" value="1"/>
</dbReference>
<dbReference type="SUPFAM" id="SSF48008">
    <property type="entry name" value="GntR ligand-binding domain-like"/>
    <property type="match status" value="1"/>
</dbReference>
<dbReference type="SUPFAM" id="SSF46785">
    <property type="entry name" value="Winged helix' DNA-binding domain"/>
    <property type="match status" value="1"/>
</dbReference>
<dbReference type="PROSITE" id="PS50949">
    <property type="entry name" value="HTH_GNTR"/>
    <property type="match status" value="1"/>
</dbReference>
<reference key="1">
    <citation type="journal article" date="2007" name="J. Bacteriol.">
        <title>The genome sequence of avian pathogenic Escherichia coli strain O1:K1:H7 shares strong similarities with human extraintestinal pathogenic E. coli genomes.</title>
        <authorList>
            <person name="Johnson T.J."/>
            <person name="Kariyawasam S."/>
            <person name="Wannemuehler Y."/>
            <person name="Mangiamele P."/>
            <person name="Johnson S.J."/>
            <person name="Doetkott C."/>
            <person name="Skyberg J.A."/>
            <person name="Lynne A.M."/>
            <person name="Johnson J.R."/>
            <person name="Nolan L.K."/>
        </authorList>
    </citation>
    <scope>NUCLEOTIDE SEQUENCE [LARGE SCALE GENOMIC DNA]</scope>
</reference>
<protein>
    <recommendedName>
        <fullName evidence="1">HTH-type transcriptional repressor NanR</fullName>
    </recommendedName>
</protein>
<organism>
    <name type="scientific">Escherichia coli O1:K1 / APEC</name>
    <dbReference type="NCBI Taxonomy" id="405955"/>
    <lineage>
        <taxon>Bacteria</taxon>
        <taxon>Pseudomonadati</taxon>
        <taxon>Pseudomonadota</taxon>
        <taxon>Gammaproteobacteria</taxon>
        <taxon>Enterobacterales</taxon>
        <taxon>Enterobacteriaceae</taxon>
        <taxon>Escherichia</taxon>
    </lineage>
</organism>
<feature type="chain" id="PRO_0000301523" description="HTH-type transcriptional repressor NanR">
    <location>
        <begin position="1"/>
        <end position="263"/>
    </location>
</feature>
<feature type="domain" description="HTH gntR-type" evidence="1">
    <location>
        <begin position="30"/>
        <end position="98"/>
    </location>
</feature>
<feature type="DNA-binding region" description="H-T-H motif" evidence="1">
    <location>
        <begin position="58"/>
        <end position="77"/>
    </location>
</feature>
<feature type="region of interest" description="Disordered" evidence="2">
    <location>
        <begin position="1"/>
        <end position="23"/>
    </location>
</feature>
<gene>
    <name evidence="1" type="primary">nanR</name>
    <name type="ordered locus">Ecok1_32160</name>
    <name type="ORF">APECO1_3217</name>
</gene>
<keyword id="KW-0238">DNA-binding</keyword>
<keyword id="KW-1185">Reference proteome</keyword>
<keyword id="KW-0678">Repressor</keyword>
<keyword id="KW-0804">Transcription</keyword>
<keyword id="KW-0805">Transcription regulation</keyword>
<evidence type="ECO:0000255" key="1">
    <source>
        <dbReference type="HAMAP-Rule" id="MF_01236"/>
    </source>
</evidence>
<evidence type="ECO:0000256" key="2">
    <source>
        <dbReference type="SAM" id="MobiDB-lite"/>
    </source>
</evidence>
<accession>A1AGC0</accession>
<name>NANR_ECOK1</name>
<comment type="function">
    <text evidence="1">Transcriptional repressor that controls expression of the genes required for the catabolism of sialic acids.</text>
</comment>
<comment type="similarity">
    <text evidence="1">Belongs to the NanR family.</text>
</comment>
<sequence>MSPMNAFDPQAEDSTTTIGRNLRSRPLARKKLSEMVEEELEQMIRRREFGEGEQLPSERELMAFFNVGRPSVREALAALKRKGLVQINNGERARVSRPSADTIIGELSGMAKDFLSHPGGIAHFEQLRLFFESSLVRYAAEHATDEQIDLLAKALEINSQSLDNNAAFIRSDVDFHRVLAEIPGNPIFMAIHVALLDWLIAARPTVADQALHEHNNVSYQQHIAIVDAIRRHDPDEADRALQSHLNSVSATWHAFGQTTNKKK</sequence>